<accession>B1LN27</accession>
<keyword id="KW-0001">2Fe-2S</keyword>
<keyword id="KW-0963">Cytoplasm</keyword>
<keyword id="KW-0408">Iron</keyword>
<keyword id="KW-0411">Iron-sulfur</keyword>
<keyword id="KW-0479">Metal-binding</keyword>
<keyword id="KW-0560">Oxidoreductase</keyword>
<dbReference type="EC" id="1.7.99.1" evidence="1"/>
<dbReference type="EMBL" id="CP000970">
    <property type="protein sequence ID" value="ACB19567.1"/>
    <property type="molecule type" value="Genomic_DNA"/>
</dbReference>
<dbReference type="RefSeq" id="WP_000458835.1">
    <property type="nucleotide sequence ID" value="NC_010498.1"/>
</dbReference>
<dbReference type="SMR" id="B1LN27"/>
<dbReference type="KEGG" id="ecm:EcSMS35_0902"/>
<dbReference type="HOGENOM" id="CLU_038344_2_0_6"/>
<dbReference type="Proteomes" id="UP000007011">
    <property type="component" value="Chromosome"/>
</dbReference>
<dbReference type="GO" id="GO:0005737">
    <property type="term" value="C:cytoplasm"/>
    <property type="evidence" value="ECO:0007669"/>
    <property type="project" value="UniProtKB-SubCell"/>
</dbReference>
<dbReference type="GO" id="GO:0051537">
    <property type="term" value="F:2 iron, 2 sulfur cluster binding"/>
    <property type="evidence" value="ECO:0007669"/>
    <property type="project" value="UniProtKB-KW"/>
</dbReference>
<dbReference type="GO" id="GO:0050418">
    <property type="term" value="F:hydroxylamine reductase activity"/>
    <property type="evidence" value="ECO:0007669"/>
    <property type="project" value="UniProtKB-UniRule"/>
</dbReference>
<dbReference type="GO" id="GO:0046872">
    <property type="term" value="F:metal ion binding"/>
    <property type="evidence" value="ECO:0007669"/>
    <property type="project" value="UniProtKB-KW"/>
</dbReference>
<dbReference type="GO" id="GO:0004601">
    <property type="term" value="F:peroxidase activity"/>
    <property type="evidence" value="ECO:0007669"/>
    <property type="project" value="TreeGrafter"/>
</dbReference>
<dbReference type="GO" id="GO:0042542">
    <property type="term" value="P:response to hydrogen peroxide"/>
    <property type="evidence" value="ECO:0007669"/>
    <property type="project" value="TreeGrafter"/>
</dbReference>
<dbReference type="CDD" id="cd01914">
    <property type="entry name" value="HCP"/>
    <property type="match status" value="1"/>
</dbReference>
<dbReference type="FunFam" id="1.20.1270.20:FF:000001">
    <property type="entry name" value="Hydroxylamine reductase"/>
    <property type="match status" value="1"/>
</dbReference>
<dbReference type="FunFam" id="1.20.1270.20:FF:000002">
    <property type="entry name" value="Hydroxylamine reductase"/>
    <property type="match status" value="1"/>
</dbReference>
<dbReference type="FunFam" id="3.40.50.2030:FF:000001">
    <property type="entry name" value="Hydroxylamine reductase"/>
    <property type="match status" value="1"/>
</dbReference>
<dbReference type="FunFam" id="3.40.50.2030:FF:000002">
    <property type="entry name" value="Hydroxylamine reductase"/>
    <property type="match status" value="1"/>
</dbReference>
<dbReference type="Gene3D" id="1.20.1270.20">
    <property type="match status" value="2"/>
</dbReference>
<dbReference type="Gene3D" id="3.40.50.2030">
    <property type="match status" value="2"/>
</dbReference>
<dbReference type="HAMAP" id="MF_00069">
    <property type="entry name" value="Hydroxylam_reduct"/>
    <property type="match status" value="1"/>
</dbReference>
<dbReference type="InterPro" id="IPR004137">
    <property type="entry name" value="HCP/CODH"/>
</dbReference>
<dbReference type="InterPro" id="IPR010048">
    <property type="entry name" value="Hydroxylam_reduct"/>
</dbReference>
<dbReference type="InterPro" id="IPR016099">
    <property type="entry name" value="Prismane-like_a/b-sand"/>
</dbReference>
<dbReference type="InterPro" id="IPR011254">
    <property type="entry name" value="Prismane-like_sf"/>
</dbReference>
<dbReference type="InterPro" id="IPR016100">
    <property type="entry name" value="Prismane_a-bundle"/>
</dbReference>
<dbReference type="NCBIfam" id="TIGR01703">
    <property type="entry name" value="hybrid_clust"/>
    <property type="match status" value="1"/>
</dbReference>
<dbReference type="NCBIfam" id="NF003658">
    <property type="entry name" value="PRK05290.1"/>
    <property type="match status" value="1"/>
</dbReference>
<dbReference type="PANTHER" id="PTHR30109">
    <property type="entry name" value="HYDROXYLAMINE REDUCTASE"/>
    <property type="match status" value="1"/>
</dbReference>
<dbReference type="PANTHER" id="PTHR30109:SF0">
    <property type="entry name" value="HYDROXYLAMINE REDUCTASE"/>
    <property type="match status" value="1"/>
</dbReference>
<dbReference type="Pfam" id="PF03063">
    <property type="entry name" value="Prismane"/>
    <property type="match status" value="1"/>
</dbReference>
<dbReference type="PIRSF" id="PIRSF000076">
    <property type="entry name" value="HCP"/>
    <property type="match status" value="1"/>
</dbReference>
<dbReference type="SUPFAM" id="SSF56821">
    <property type="entry name" value="Prismane protein-like"/>
    <property type="match status" value="1"/>
</dbReference>
<organism>
    <name type="scientific">Escherichia coli (strain SMS-3-5 / SECEC)</name>
    <dbReference type="NCBI Taxonomy" id="439855"/>
    <lineage>
        <taxon>Bacteria</taxon>
        <taxon>Pseudomonadati</taxon>
        <taxon>Pseudomonadota</taxon>
        <taxon>Gammaproteobacteria</taxon>
        <taxon>Enterobacterales</taxon>
        <taxon>Enterobacteriaceae</taxon>
        <taxon>Escherichia</taxon>
    </lineage>
</organism>
<feature type="chain" id="PRO_1000192556" description="Hydroxylamine reductase">
    <location>
        <begin position="1"/>
        <end position="550"/>
    </location>
</feature>
<feature type="binding site" evidence="1">
    <location>
        <position position="3"/>
    </location>
    <ligand>
        <name>[2Fe-2S] cluster</name>
        <dbReference type="ChEBI" id="CHEBI:190135"/>
    </ligand>
</feature>
<feature type="binding site" evidence="1">
    <location>
        <position position="6"/>
    </location>
    <ligand>
        <name>[2Fe-2S] cluster</name>
        <dbReference type="ChEBI" id="CHEBI:190135"/>
    </ligand>
</feature>
<feature type="binding site" evidence="1">
    <location>
        <position position="18"/>
    </location>
    <ligand>
        <name>[2Fe-2S] cluster</name>
        <dbReference type="ChEBI" id="CHEBI:190135"/>
    </ligand>
</feature>
<feature type="binding site" evidence="1">
    <location>
        <position position="25"/>
    </location>
    <ligand>
        <name>[2Fe-2S] cluster</name>
        <dbReference type="ChEBI" id="CHEBI:190135"/>
    </ligand>
</feature>
<feature type="binding site" evidence="1">
    <location>
        <position position="249"/>
    </location>
    <ligand>
        <name>hybrid [4Fe-2O-2S] cluster</name>
        <dbReference type="ChEBI" id="CHEBI:60519"/>
    </ligand>
</feature>
<feature type="binding site" evidence="1">
    <location>
        <position position="273"/>
    </location>
    <ligand>
        <name>hybrid [4Fe-2O-2S] cluster</name>
        <dbReference type="ChEBI" id="CHEBI:60519"/>
    </ligand>
</feature>
<feature type="binding site" evidence="1">
    <location>
        <position position="317"/>
    </location>
    <ligand>
        <name>hybrid [4Fe-2O-2S] cluster</name>
        <dbReference type="ChEBI" id="CHEBI:60519"/>
    </ligand>
</feature>
<feature type="binding site" description="via persulfide group" evidence="1">
    <location>
        <position position="405"/>
    </location>
    <ligand>
        <name>hybrid [4Fe-2O-2S] cluster</name>
        <dbReference type="ChEBI" id="CHEBI:60519"/>
    </ligand>
</feature>
<feature type="binding site" evidence="1">
    <location>
        <position position="433"/>
    </location>
    <ligand>
        <name>hybrid [4Fe-2O-2S] cluster</name>
        <dbReference type="ChEBI" id="CHEBI:60519"/>
    </ligand>
</feature>
<feature type="binding site" evidence="1">
    <location>
        <position position="458"/>
    </location>
    <ligand>
        <name>hybrid [4Fe-2O-2S] cluster</name>
        <dbReference type="ChEBI" id="CHEBI:60519"/>
    </ligand>
</feature>
<feature type="binding site" evidence="1">
    <location>
        <position position="492"/>
    </location>
    <ligand>
        <name>hybrid [4Fe-2O-2S] cluster</name>
        <dbReference type="ChEBI" id="CHEBI:60519"/>
    </ligand>
</feature>
<feature type="binding site" evidence="1">
    <location>
        <position position="494"/>
    </location>
    <ligand>
        <name>hybrid [4Fe-2O-2S] cluster</name>
        <dbReference type="ChEBI" id="CHEBI:60519"/>
    </ligand>
</feature>
<feature type="modified residue" description="Cysteine persulfide" evidence="1">
    <location>
        <position position="405"/>
    </location>
</feature>
<reference key="1">
    <citation type="journal article" date="2008" name="J. Bacteriol.">
        <title>Insights into the environmental resistance gene pool from the genome sequence of the multidrug-resistant environmental isolate Escherichia coli SMS-3-5.</title>
        <authorList>
            <person name="Fricke W.F."/>
            <person name="Wright M.S."/>
            <person name="Lindell A.H."/>
            <person name="Harkins D.M."/>
            <person name="Baker-Austin C."/>
            <person name="Ravel J."/>
            <person name="Stepanauskas R."/>
        </authorList>
    </citation>
    <scope>NUCLEOTIDE SEQUENCE [LARGE SCALE GENOMIC DNA]</scope>
    <source>
        <strain>SMS-3-5 / SECEC</strain>
    </source>
</reference>
<comment type="function">
    <text evidence="1">Catalyzes the reduction of hydroxylamine to form NH(3) and H(2)O.</text>
</comment>
<comment type="catalytic activity">
    <reaction evidence="1">
        <text>A + NH4(+) + H2O = hydroxylamine + AH2 + H(+)</text>
        <dbReference type="Rhea" id="RHEA:22052"/>
        <dbReference type="ChEBI" id="CHEBI:13193"/>
        <dbReference type="ChEBI" id="CHEBI:15377"/>
        <dbReference type="ChEBI" id="CHEBI:15378"/>
        <dbReference type="ChEBI" id="CHEBI:15429"/>
        <dbReference type="ChEBI" id="CHEBI:17499"/>
        <dbReference type="ChEBI" id="CHEBI:28938"/>
        <dbReference type="EC" id="1.7.99.1"/>
    </reaction>
</comment>
<comment type="cofactor">
    <cofactor evidence="1">
        <name>[2Fe-2S] cluster</name>
        <dbReference type="ChEBI" id="CHEBI:190135"/>
    </cofactor>
    <text evidence="1">Binds 1 [2Fe-2S] cluster.</text>
</comment>
<comment type="cofactor">
    <cofactor evidence="1">
        <name>hybrid [4Fe-2O-2S] cluster</name>
        <dbReference type="ChEBI" id="CHEBI:60519"/>
    </cofactor>
    <text evidence="1">Binds 1 hybrid [4Fe-2O-2S] cluster.</text>
</comment>
<comment type="subcellular location">
    <subcellularLocation>
        <location evidence="1">Cytoplasm</location>
    </subcellularLocation>
</comment>
<comment type="similarity">
    <text evidence="1">Belongs to the HCP family.</text>
</comment>
<sequence>MFCVQCEQTIRTPAGNGCSYAQGMCGKTAETSDLQDLLIAALQGLSAWAVKAREYGIINHDVDSFAPRAFFSTLTNVNFDSPRIVGYAREAIALREALKAQCLAVEANARVDNPMADLQLVSDDLGELQRQAAEFTPNKDKAAIGENILGLRLLCLYGLKGAAAYMEHAHVLGQYDNDIYAQYHKIMAWLGTWPADMNALLECSMEIGQMNFKVMSILDAGETSKYGHPTPTQVNVKATAGKCILISGHDLKDLYNLLEQTEGTGVNVYTHGEMLPAHGYPELRKFKHLVGNYGSGWQNQQVEFARFPGPIVMTSNCIIDPTVGAYDDRIWTRSIVGWPGVRHLDGEDFSAVIAQAQQMAGFPYSEIPHLITVGFGRQTLLGAADTLIDLVSREKLRHIFLLGGCDGARGERHYFTDFATSVPDDCLILTLACGKYRFNKLEFGDIEGLPRLVDAGQCNDAYSAIILAVTLAEKLGCGVNDLPLSLVLSWFEQKAIVILLTLLSLGVKNIVTGPTAPGFLTPDLLAVLNEKFGLRSITTVEEDMKQLLSA</sequence>
<name>HCP_ECOSM</name>
<protein>
    <recommendedName>
        <fullName evidence="1">Hydroxylamine reductase</fullName>
        <ecNumber evidence="1">1.7.99.1</ecNumber>
    </recommendedName>
    <alternativeName>
        <fullName evidence="1">Hybrid-cluster protein</fullName>
        <shortName evidence="1">HCP</shortName>
    </alternativeName>
    <alternativeName>
        <fullName evidence="1">Prismane protein</fullName>
    </alternativeName>
</protein>
<evidence type="ECO:0000255" key="1">
    <source>
        <dbReference type="HAMAP-Rule" id="MF_00069"/>
    </source>
</evidence>
<gene>
    <name evidence="1" type="primary">hcp</name>
    <name type="ordered locus">EcSMS35_0902</name>
</gene>
<proteinExistence type="inferred from homology"/>